<feature type="chain" id="PRO_0000250903" description="NADH-quinone oxidoreductase subunit I">
    <location>
        <begin position="1"/>
        <end position="169"/>
    </location>
</feature>
<feature type="domain" description="4Fe-4S ferredoxin-type 1" evidence="1">
    <location>
        <begin position="61"/>
        <end position="90"/>
    </location>
</feature>
<feature type="domain" description="4Fe-4S ferredoxin-type 2" evidence="1">
    <location>
        <begin position="100"/>
        <end position="129"/>
    </location>
</feature>
<feature type="binding site" evidence="1">
    <location>
        <position position="70"/>
    </location>
    <ligand>
        <name>[4Fe-4S] cluster</name>
        <dbReference type="ChEBI" id="CHEBI:49883"/>
        <label>1</label>
    </ligand>
</feature>
<feature type="binding site" evidence="1">
    <location>
        <position position="73"/>
    </location>
    <ligand>
        <name>[4Fe-4S] cluster</name>
        <dbReference type="ChEBI" id="CHEBI:49883"/>
        <label>1</label>
    </ligand>
</feature>
<feature type="binding site" evidence="1">
    <location>
        <position position="76"/>
    </location>
    <ligand>
        <name>[4Fe-4S] cluster</name>
        <dbReference type="ChEBI" id="CHEBI:49883"/>
        <label>1</label>
    </ligand>
</feature>
<feature type="binding site" evidence="1">
    <location>
        <position position="80"/>
    </location>
    <ligand>
        <name>[4Fe-4S] cluster</name>
        <dbReference type="ChEBI" id="CHEBI:49883"/>
        <label>2</label>
    </ligand>
</feature>
<feature type="binding site" evidence="1">
    <location>
        <position position="109"/>
    </location>
    <ligand>
        <name>[4Fe-4S] cluster</name>
        <dbReference type="ChEBI" id="CHEBI:49883"/>
        <label>2</label>
    </ligand>
</feature>
<feature type="binding site" evidence="1">
    <location>
        <position position="112"/>
    </location>
    <ligand>
        <name>[4Fe-4S] cluster</name>
        <dbReference type="ChEBI" id="CHEBI:49883"/>
        <label>2</label>
    </ligand>
</feature>
<feature type="binding site" evidence="1">
    <location>
        <position position="115"/>
    </location>
    <ligand>
        <name>[4Fe-4S] cluster</name>
        <dbReference type="ChEBI" id="CHEBI:49883"/>
        <label>2</label>
    </ligand>
</feature>
<feature type="binding site" evidence="1">
    <location>
        <position position="119"/>
    </location>
    <ligand>
        <name>[4Fe-4S] cluster</name>
        <dbReference type="ChEBI" id="CHEBI:49883"/>
        <label>1</label>
    </ligand>
</feature>
<reference key="1">
    <citation type="journal article" date="2006" name="PLoS Genet.">
        <title>Comparative genomics of emerging human ehrlichiosis agents.</title>
        <authorList>
            <person name="Dunning Hotopp J.C."/>
            <person name="Lin M."/>
            <person name="Madupu R."/>
            <person name="Crabtree J."/>
            <person name="Angiuoli S.V."/>
            <person name="Eisen J.A."/>
            <person name="Seshadri R."/>
            <person name="Ren Q."/>
            <person name="Wu M."/>
            <person name="Utterback T.R."/>
            <person name="Smith S."/>
            <person name="Lewis M."/>
            <person name="Khouri H."/>
            <person name="Zhang C."/>
            <person name="Niu H."/>
            <person name="Lin Q."/>
            <person name="Ohashi N."/>
            <person name="Zhi N."/>
            <person name="Nelson W.C."/>
            <person name="Brinkac L.M."/>
            <person name="Dodson R.J."/>
            <person name="Rosovitz M.J."/>
            <person name="Sundaram J.P."/>
            <person name="Daugherty S.C."/>
            <person name="Davidsen T."/>
            <person name="Durkin A.S."/>
            <person name="Gwinn M.L."/>
            <person name="Haft D.H."/>
            <person name="Selengut J.D."/>
            <person name="Sullivan S.A."/>
            <person name="Zafar N."/>
            <person name="Zhou L."/>
            <person name="Benahmed F."/>
            <person name="Forberger H."/>
            <person name="Halpin R."/>
            <person name="Mulligan S."/>
            <person name="Robinson J."/>
            <person name="White O."/>
            <person name="Rikihisa Y."/>
            <person name="Tettelin H."/>
        </authorList>
    </citation>
    <scope>NUCLEOTIDE SEQUENCE [LARGE SCALE GENOMIC DNA]</scope>
    <source>
        <strain>ATCC CRL-10679 / Arkansas</strain>
    </source>
</reference>
<protein>
    <recommendedName>
        <fullName evidence="1">NADH-quinone oxidoreductase subunit I</fullName>
        <ecNumber evidence="1">7.1.1.-</ecNumber>
    </recommendedName>
    <alternativeName>
        <fullName evidence="1">NADH dehydrogenase I subunit I</fullName>
    </alternativeName>
    <alternativeName>
        <fullName evidence="1">NDH-1 subunit I</fullName>
    </alternativeName>
</protein>
<accession>Q2GGD7</accession>
<dbReference type="EC" id="7.1.1.-" evidence="1"/>
<dbReference type="EMBL" id="CP000236">
    <property type="protein sequence ID" value="ABD44665.1"/>
    <property type="molecule type" value="Genomic_DNA"/>
</dbReference>
<dbReference type="RefSeq" id="WP_006009861.1">
    <property type="nucleotide sequence ID" value="NC_007799.1"/>
</dbReference>
<dbReference type="SMR" id="Q2GGD7"/>
<dbReference type="STRING" id="205920.ECH_0691"/>
<dbReference type="KEGG" id="ech:ECH_0691"/>
<dbReference type="eggNOG" id="COG1143">
    <property type="taxonomic scope" value="Bacteria"/>
</dbReference>
<dbReference type="HOGENOM" id="CLU_067218_5_1_5"/>
<dbReference type="OrthoDB" id="9808559at2"/>
<dbReference type="Proteomes" id="UP000008320">
    <property type="component" value="Chromosome"/>
</dbReference>
<dbReference type="GO" id="GO:0005886">
    <property type="term" value="C:plasma membrane"/>
    <property type="evidence" value="ECO:0007669"/>
    <property type="project" value="UniProtKB-SubCell"/>
</dbReference>
<dbReference type="GO" id="GO:0051539">
    <property type="term" value="F:4 iron, 4 sulfur cluster binding"/>
    <property type="evidence" value="ECO:0007669"/>
    <property type="project" value="UniProtKB-KW"/>
</dbReference>
<dbReference type="GO" id="GO:0005506">
    <property type="term" value="F:iron ion binding"/>
    <property type="evidence" value="ECO:0007669"/>
    <property type="project" value="UniProtKB-UniRule"/>
</dbReference>
<dbReference type="GO" id="GO:0050136">
    <property type="term" value="F:NADH:ubiquinone reductase (non-electrogenic) activity"/>
    <property type="evidence" value="ECO:0007669"/>
    <property type="project" value="UniProtKB-UniRule"/>
</dbReference>
<dbReference type="GO" id="GO:0048038">
    <property type="term" value="F:quinone binding"/>
    <property type="evidence" value="ECO:0007669"/>
    <property type="project" value="UniProtKB-KW"/>
</dbReference>
<dbReference type="GO" id="GO:0009060">
    <property type="term" value="P:aerobic respiration"/>
    <property type="evidence" value="ECO:0007669"/>
    <property type="project" value="TreeGrafter"/>
</dbReference>
<dbReference type="FunFam" id="3.30.70.3270:FF:000001">
    <property type="entry name" value="NADH-quinone oxidoreductase subunit I 1"/>
    <property type="match status" value="1"/>
</dbReference>
<dbReference type="Gene3D" id="3.30.70.3270">
    <property type="match status" value="1"/>
</dbReference>
<dbReference type="HAMAP" id="MF_01351">
    <property type="entry name" value="NDH1_NuoI"/>
    <property type="match status" value="1"/>
</dbReference>
<dbReference type="InterPro" id="IPR017896">
    <property type="entry name" value="4Fe4S_Fe-S-bd"/>
</dbReference>
<dbReference type="InterPro" id="IPR017900">
    <property type="entry name" value="4Fe4S_Fe_S_CS"/>
</dbReference>
<dbReference type="InterPro" id="IPR010226">
    <property type="entry name" value="NADH_quinone_OxRdtase_chainI"/>
</dbReference>
<dbReference type="NCBIfam" id="TIGR01971">
    <property type="entry name" value="NuoI"/>
    <property type="match status" value="1"/>
</dbReference>
<dbReference type="NCBIfam" id="NF004538">
    <property type="entry name" value="PRK05888.1-4"/>
    <property type="match status" value="1"/>
</dbReference>
<dbReference type="NCBIfam" id="NF004539">
    <property type="entry name" value="PRK05888.1-5"/>
    <property type="match status" value="1"/>
</dbReference>
<dbReference type="PANTHER" id="PTHR10849:SF20">
    <property type="entry name" value="NADH DEHYDROGENASE [UBIQUINONE] IRON-SULFUR PROTEIN 8, MITOCHONDRIAL"/>
    <property type="match status" value="1"/>
</dbReference>
<dbReference type="PANTHER" id="PTHR10849">
    <property type="entry name" value="NADH DEHYDROGENASE UBIQUINONE IRON-SULFUR PROTEIN 8, MITOCHONDRIAL"/>
    <property type="match status" value="1"/>
</dbReference>
<dbReference type="Pfam" id="PF12838">
    <property type="entry name" value="Fer4_7"/>
    <property type="match status" value="1"/>
</dbReference>
<dbReference type="SUPFAM" id="SSF54862">
    <property type="entry name" value="4Fe-4S ferredoxins"/>
    <property type="match status" value="1"/>
</dbReference>
<dbReference type="PROSITE" id="PS00198">
    <property type="entry name" value="4FE4S_FER_1"/>
    <property type="match status" value="2"/>
</dbReference>
<dbReference type="PROSITE" id="PS51379">
    <property type="entry name" value="4FE4S_FER_2"/>
    <property type="match status" value="2"/>
</dbReference>
<comment type="function">
    <text evidence="1">NDH-1 shuttles electrons from NADH, via FMN and iron-sulfur (Fe-S) centers, to quinones in the respiratory chain. The immediate electron acceptor for the enzyme in this species is believed to be ubiquinone. Couples the redox reaction to proton translocation (for every two electrons transferred, four hydrogen ions are translocated across the cytoplasmic membrane), and thus conserves the redox energy in a proton gradient.</text>
</comment>
<comment type="catalytic activity">
    <reaction evidence="1">
        <text>a quinone + NADH + 5 H(+)(in) = a quinol + NAD(+) + 4 H(+)(out)</text>
        <dbReference type="Rhea" id="RHEA:57888"/>
        <dbReference type="ChEBI" id="CHEBI:15378"/>
        <dbReference type="ChEBI" id="CHEBI:24646"/>
        <dbReference type="ChEBI" id="CHEBI:57540"/>
        <dbReference type="ChEBI" id="CHEBI:57945"/>
        <dbReference type="ChEBI" id="CHEBI:132124"/>
    </reaction>
</comment>
<comment type="cofactor">
    <cofactor evidence="1">
        <name>[4Fe-4S] cluster</name>
        <dbReference type="ChEBI" id="CHEBI:49883"/>
    </cofactor>
    <text evidence="1">Binds 2 [4Fe-4S] clusters per subunit.</text>
</comment>
<comment type="subunit">
    <text evidence="1">NDH-1 is composed of 14 different subunits. Subunits NuoA, H, J, K, L, M, N constitute the membrane sector of the complex.</text>
</comment>
<comment type="subcellular location">
    <subcellularLocation>
        <location evidence="1">Cell inner membrane</location>
        <topology evidence="1">Peripheral membrane protein</topology>
    </subcellularLocation>
</comment>
<comment type="similarity">
    <text evidence="1">Belongs to the complex I 23 kDa subunit family.</text>
</comment>
<gene>
    <name evidence="1" type="primary">nuoI</name>
    <name type="ordered locus">ECH_0691</name>
</gene>
<sequence>MIYKKNFSKLSPITNLIRSALLNCRGMYITLRYMFKPKVTLNYPLEKGPLSTRFRGEHALRKYKNGEERCIACKLCEAICPAQAITIEAQERDDGSRRTVRYDIDMTKCIYCGFCQEACPVDAIVEGPNFEYATETREELMYNKSKLLHNGQIWEEAIDLRIKKNSQFY</sequence>
<organism>
    <name type="scientific">Ehrlichia chaffeensis (strain ATCC CRL-10679 / Arkansas)</name>
    <dbReference type="NCBI Taxonomy" id="205920"/>
    <lineage>
        <taxon>Bacteria</taxon>
        <taxon>Pseudomonadati</taxon>
        <taxon>Pseudomonadota</taxon>
        <taxon>Alphaproteobacteria</taxon>
        <taxon>Rickettsiales</taxon>
        <taxon>Anaplasmataceae</taxon>
        <taxon>Ehrlichia</taxon>
    </lineage>
</organism>
<keyword id="KW-0004">4Fe-4S</keyword>
<keyword id="KW-0997">Cell inner membrane</keyword>
<keyword id="KW-1003">Cell membrane</keyword>
<keyword id="KW-0408">Iron</keyword>
<keyword id="KW-0411">Iron-sulfur</keyword>
<keyword id="KW-0472">Membrane</keyword>
<keyword id="KW-0479">Metal-binding</keyword>
<keyword id="KW-0520">NAD</keyword>
<keyword id="KW-0874">Quinone</keyword>
<keyword id="KW-1185">Reference proteome</keyword>
<keyword id="KW-0677">Repeat</keyword>
<keyword id="KW-1278">Translocase</keyword>
<keyword id="KW-0830">Ubiquinone</keyword>
<name>NUOI_EHRCR</name>
<evidence type="ECO:0000255" key="1">
    <source>
        <dbReference type="HAMAP-Rule" id="MF_01351"/>
    </source>
</evidence>
<proteinExistence type="inferred from homology"/>